<accession>Q4QKM7</accession>
<protein>
    <recommendedName>
        <fullName evidence="1">4-hydroxy-tetrahydrodipicolinate reductase</fullName>
        <shortName evidence="1">HTPA reductase</shortName>
        <ecNumber evidence="1">1.17.1.8</ecNumber>
    </recommendedName>
</protein>
<feature type="chain" id="PRO_0000228355" description="4-hydroxy-tetrahydrodipicolinate reductase">
    <location>
        <begin position="1"/>
        <end position="270"/>
    </location>
</feature>
<feature type="active site" description="Proton donor/acceptor" evidence="1">
    <location>
        <position position="156"/>
    </location>
</feature>
<feature type="active site" description="Proton donor" evidence="1">
    <location>
        <position position="160"/>
    </location>
</feature>
<feature type="binding site" evidence="1">
    <location>
        <begin position="9"/>
        <end position="14"/>
    </location>
    <ligand>
        <name>NAD(+)</name>
        <dbReference type="ChEBI" id="CHEBI:57540"/>
    </ligand>
</feature>
<feature type="binding site" evidence="1">
    <location>
        <position position="35"/>
    </location>
    <ligand>
        <name>NAD(+)</name>
        <dbReference type="ChEBI" id="CHEBI:57540"/>
    </ligand>
</feature>
<feature type="binding site" evidence="1">
    <location>
        <position position="36"/>
    </location>
    <ligand>
        <name>NADP(+)</name>
        <dbReference type="ChEBI" id="CHEBI:58349"/>
    </ligand>
</feature>
<feature type="binding site" evidence="1">
    <location>
        <begin position="99"/>
        <end position="101"/>
    </location>
    <ligand>
        <name>NAD(+)</name>
        <dbReference type="ChEBI" id="CHEBI:57540"/>
    </ligand>
</feature>
<feature type="binding site" evidence="1">
    <location>
        <begin position="123"/>
        <end position="126"/>
    </location>
    <ligand>
        <name>NAD(+)</name>
        <dbReference type="ChEBI" id="CHEBI:57540"/>
    </ligand>
</feature>
<feature type="binding site" evidence="1">
    <location>
        <position position="157"/>
    </location>
    <ligand>
        <name>(S)-2,3,4,5-tetrahydrodipicolinate</name>
        <dbReference type="ChEBI" id="CHEBI:16845"/>
    </ligand>
</feature>
<feature type="binding site" evidence="1">
    <location>
        <begin position="166"/>
        <end position="167"/>
    </location>
    <ligand>
        <name>(S)-2,3,4,5-tetrahydrodipicolinate</name>
        <dbReference type="ChEBI" id="CHEBI:16845"/>
    </ligand>
</feature>
<evidence type="ECO:0000255" key="1">
    <source>
        <dbReference type="HAMAP-Rule" id="MF_00102"/>
    </source>
</evidence>
<evidence type="ECO:0000305" key="2"/>
<name>DAPB_HAEI8</name>
<gene>
    <name evidence="1" type="primary">dapB</name>
    <name type="ordered locus">NTHI1621</name>
</gene>
<sequence>MTLKIAIAGAGGRMGRQLIQAVHSAEGVELGAAFERKGSSLVGTDAGELAGIGHLGVAVSDDLESQKDKFDLLIDFTRPEGSLEHIAFCVANNKKMVIGTTGFDQNGKAAIKAASDKIAIVFASNFSVGVNLVFKLLEKAAKVMGDYCDIEVIEAHHRHKVDAPSGTALSMGEHIAKTLGRDLKTHGVFCREGITGERKRDEIGFSTIRASDVVGEHTVWFADIGERVEISHKASSRMTFANGAVRAGKWLENKANGLFDMTDVLDLNNL</sequence>
<organism>
    <name type="scientific">Haemophilus influenzae (strain 86-028NP)</name>
    <dbReference type="NCBI Taxonomy" id="281310"/>
    <lineage>
        <taxon>Bacteria</taxon>
        <taxon>Pseudomonadati</taxon>
        <taxon>Pseudomonadota</taxon>
        <taxon>Gammaproteobacteria</taxon>
        <taxon>Pasteurellales</taxon>
        <taxon>Pasteurellaceae</taxon>
        <taxon>Haemophilus</taxon>
    </lineage>
</organism>
<keyword id="KW-0028">Amino-acid biosynthesis</keyword>
<keyword id="KW-0963">Cytoplasm</keyword>
<keyword id="KW-0220">Diaminopimelate biosynthesis</keyword>
<keyword id="KW-0457">Lysine biosynthesis</keyword>
<keyword id="KW-0520">NAD</keyword>
<keyword id="KW-0521">NADP</keyword>
<keyword id="KW-0560">Oxidoreductase</keyword>
<dbReference type="EC" id="1.17.1.8" evidence="1"/>
<dbReference type="EMBL" id="CP000057">
    <property type="protein sequence ID" value="AAX88420.1"/>
    <property type="molecule type" value="Genomic_DNA"/>
</dbReference>
<dbReference type="RefSeq" id="WP_011272565.1">
    <property type="nucleotide sequence ID" value="NC_007146.2"/>
</dbReference>
<dbReference type="SMR" id="Q4QKM7"/>
<dbReference type="GeneID" id="93220355"/>
<dbReference type="KEGG" id="hit:NTHI1621"/>
<dbReference type="HOGENOM" id="CLU_047479_2_1_6"/>
<dbReference type="UniPathway" id="UPA00034">
    <property type="reaction ID" value="UER00018"/>
</dbReference>
<dbReference type="Proteomes" id="UP000002525">
    <property type="component" value="Chromosome"/>
</dbReference>
<dbReference type="GO" id="GO:0005829">
    <property type="term" value="C:cytosol"/>
    <property type="evidence" value="ECO:0007669"/>
    <property type="project" value="TreeGrafter"/>
</dbReference>
<dbReference type="GO" id="GO:0008839">
    <property type="term" value="F:4-hydroxy-tetrahydrodipicolinate reductase"/>
    <property type="evidence" value="ECO:0007669"/>
    <property type="project" value="UniProtKB-EC"/>
</dbReference>
<dbReference type="GO" id="GO:0051287">
    <property type="term" value="F:NAD binding"/>
    <property type="evidence" value="ECO:0007669"/>
    <property type="project" value="UniProtKB-UniRule"/>
</dbReference>
<dbReference type="GO" id="GO:0050661">
    <property type="term" value="F:NADP binding"/>
    <property type="evidence" value="ECO:0007669"/>
    <property type="project" value="UniProtKB-UniRule"/>
</dbReference>
<dbReference type="GO" id="GO:0016726">
    <property type="term" value="F:oxidoreductase activity, acting on CH or CH2 groups, NAD or NADP as acceptor"/>
    <property type="evidence" value="ECO:0007669"/>
    <property type="project" value="UniProtKB-UniRule"/>
</dbReference>
<dbReference type="GO" id="GO:0019877">
    <property type="term" value="P:diaminopimelate biosynthetic process"/>
    <property type="evidence" value="ECO:0007669"/>
    <property type="project" value="UniProtKB-UniRule"/>
</dbReference>
<dbReference type="GO" id="GO:0009089">
    <property type="term" value="P:lysine biosynthetic process via diaminopimelate"/>
    <property type="evidence" value="ECO:0007669"/>
    <property type="project" value="UniProtKB-UniRule"/>
</dbReference>
<dbReference type="CDD" id="cd02274">
    <property type="entry name" value="DHDPR_N"/>
    <property type="match status" value="1"/>
</dbReference>
<dbReference type="FunFam" id="3.30.360.10:FF:000004">
    <property type="entry name" value="4-hydroxy-tetrahydrodipicolinate reductase"/>
    <property type="match status" value="1"/>
</dbReference>
<dbReference type="FunFam" id="3.40.50.720:FF:000048">
    <property type="entry name" value="4-hydroxy-tetrahydrodipicolinate reductase"/>
    <property type="match status" value="1"/>
</dbReference>
<dbReference type="Gene3D" id="3.30.360.10">
    <property type="entry name" value="Dihydrodipicolinate Reductase, domain 2"/>
    <property type="match status" value="1"/>
</dbReference>
<dbReference type="Gene3D" id="3.40.50.720">
    <property type="entry name" value="NAD(P)-binding Rossmann-like Domain"/>
    <property type="match status" value="1"/>
</dbReference>
<dbReference type="HAMAP" id="MF_00102">
    <property type="entry name" value="DapB"/>
    <property type="match status" value="1"/>
</dbReference>
<dbReference type="InterPro" id="IPR022663">
    <property type="entry name" value="DapB_C"/>
</dbReference>
<dbReference type="InterPro" id="IPR000846">
    <property type="entry name" value="DapB_N"/>
</dbReference>
<dbReference type="InterPro" id="IPR022664">
    <property type="entry name" value="DapB_N_CS"/>
</dbReference>
<dbReference type="InterPro" id="IPR023940">
    <property type="entry name" value="DHDPR_bac"/>
</dbReference>
<dbReference type="InterPro" id="IPR036291">
    <property type="entry name" value="NAD(P)-bd_dom_sf"/>
</dbReference>
<dbReference type="NCBIfam" id="TIGR00036">
    <property type="entry name" value="dapB"/>
    <property type="match status" value="1"/>
</dbReference>
<dbReference type="PANTHER" id="PTHR20836:SF0">
    <property type="entry name" value="4-HYDROXY-TETRAHYDRODIPICOLINATE REDUCTASE 1, CHLOROPLASTIC-RELATED"/>
    <property type="match status" value="1"/>
</dbReference>
<dbReference type="PANTHER" id="PTHR20836">
    <property type="entry name" value="DIHYDRODIPICOLINATE REDUCTASE"/>
    <property type="match status" value="1"/>
</dbReference>
<dbReference type="Pfam" id="PF05173">
    <property type="entry name" value="DapB_C"/>
    <property type="match status" value="1"/>
</dbReference>
<dbReference type="Pfam" id="PF01113">
    <property type="entry name" value="DapB_N"/>
    <property type="match status" value="1"/>
</dbReference>
<dbReference type="PIRSF" id="PIRSF000161">
    <property type="entry name" value="DHPR"/>
    <property type="match status" value="1"/>
</dbReference>
<dbReference type="SUPFAM" id="SSF55347">
    <property type="entry name" value="Glyceraldehyde-3-phosphate dehydrogenase-like, C-terminal domain"/>
    <property type="match status" value="1"/>
</dbReference>
<dbReference type="SUPFAM" id="SSF51735">
    <property type="entry name" value="NAD(P)-binding Rossmann-fold domains"/>
    <property type="match status" value="1"/>
</dbReference>
<dbReference type="PROSITE" id="PS01298">
    <property type="entry name" value="DAPB"/>
    <property type="match status" value="1"/>
</dbReference>
<proteinExistence type="inferred from homology"/>
<comment type="function">
    <text evidence="1">Catalyzes the conversion of 4-hydroxy-tetrahydrodipicolinate (HTPA) to tetrahydrodipicolinate.</text>
</comment>
<comment type="catalytic activity">
    <reaction evidence="1">
        <text>(S)-2,3,4,5-tetrahydrodipicolinate + NAD(+) + H2O = (2S,4S)-4-hydroxy-2,3,4,5-tetrahydrodipicolinate + NADH + H(+)</text>
        <dbReference type="Rhea" id="RHEA:35323"/>
        <dbReference type="ChEBI" id="CHEBI:15377"/>
        <dbReference type="ChEBI" id="CHEBI:15378"/>
        <dbReference type="ChEBI" id="CHEBI:16845"/>
        <dbReference type="ChEBI" id="CHEBI:57540"/>
        <dbReference type="ChEBI" id="CHEBI:57945"/>
        <dbReference type="ChEBI" id="CHEBI:67139"/>
        <dbReference type="EC" id="1.17.1.8"/>
    </reaction>
</comment>
<comment type="catalytic activity">
    <reaction evidence="1">
        <text>(S)-2,3,4,5-tetrahydrodipicolinate + NADP(+) + H2O = (2S,4S)-4-hydroxy-2,3,4,5-tetrahydrodipicolinate + NADPH + H(+)</text>
        <dbReference type="Rhea" id="RHEA:35331"/>
        <dbReference type="ChEBI" id="CHEBI:15377"/>
        <dbReference type="ChEBI" id="CHEBI:15378"/>
        <dbReference type="ChEBI" id="CHEBI:16845"/>
        <dbReference type="ChEBI" id="CHEBI:57783"/>
        <dbReference type="ChEBI" id="CHEBI:58349"/>
        <dbReference type="ChEBI" id="CHEBI:67139"/>
        <dbReference type="EC" id="1.17.1.8"/>
    </reaction>
</comment>
<comment type="pathway">
    <text evidence="1">Amino-acid biosynthesis; L-lysine biosynthesis via DAP pathway; (S)-tetrahydrodipicolinate from L-aspartate: step 4/4.</text>
</comment>
<comment type="subcellular location">
    <subcellularLocation>
        <location evidence="1">Cytoplasm</location>
    </subcellularLocation>
</comment>
<comment type="similarity">
    <text evidence="1">Belongs to the DapB family.</text>
</comment>
<comment type="caution">
    <text evidence="2">Was originally thought to be a dihydrodipicolinate reductase (DHDPR), catalyzing the conversion of dihydrodipicolinate to tetrahydrodipicolinate. However, it was shown in E.coli that the substrate of the enzymatic reaction is not dihydrodipicolinate (DHDP) but in fact (2S,4S)-4-hydroxy-2,3,4,5-tetrahydrodipicolinic acid (HTPA), the product released by the DapA-catalyzed reaction.</text>
</comment>
<reference key="1">
    <citation type="journal article" date="2005" name="J. Bacteriol.">
        <title>Genomic sequence of an otitis media isolate of nontypeable Haemophilus influenzae: comparative study with H. influenzae serotype d, strain KW20.</title>
        <authorList>
            <person name="Harrison A."/>
            <person name="Dyer D.W."/>
            <person name="Gillaspy A."/>
            <person name="Ray W.C."/>
            <person name="Mungur R."/>
            <person name="Carson M.B."/>
            <person name="Zhong H."/>
            <person name="Gipson J."/>
            <person name="Gipson M."/>
            <person name="Johnson L.S."/>
            <person name="Lewis L."/>
            <person name="Bakaletz L.O."/>
            <person name="Munson R.S. Jr."/>
        </authorList>
    </citation>
    <scope>NUCLEOTIDE SEQUENCE [LARGE SCALE GENOMIC DNA]</scope>
    <source>
        <strain>86-028NP</strain>
    </source>
</reference>